<gene>
    <name evidence="1" type="primary">rpsG</name>
    <name type="ordered locus">RoseRS_1189</name>
</gene>
<evidence type="ECO:0000255" key="1">
    <source>
        <dbReference type="HAMAP-Rule" id="MF_00480"/>
    </source>
</evidence>
<evidence type="ECO:0000305" key="2"/>
<name>RS7_ROSS1</name>
<reference key="1">
    <citation type="submission" date="2007-04" db="EMBL/GenBank/DDBJ databases">
        <title>Complete sequence of Roseiflexus sp. RS-1.</title>
        <authorList>
            <consortium name="US DOE Joint Genome Institute"/>
            <person name="Copeland A."/>
            <person name="Lucas S."/>
            <person name="Lapidus A."/>
            <person name="Barry K."/>
            <person name="Detter J.C."/>
            <person name="Glavina del Rio T."/>
            <person name="Hammon N."/>
            <person name="Israni S."/>
            <person name="Dalin E."/>
            <person name="Tice H."/>
            <person name="Pitluck S."/>
            <person name="Chertkov O."/>
            <person name="Brettin T."/>
            <person name="Bruce D."/>
            <person name="Han C."/>
            <person name="Schmutz J."/>
            <person name="Larimer F."/>
            <person name="Land M."/>
            <person name="Hauser L."/>
            <person name="Kyrpides N."/>
            <person name="Mikhailova N."/>
            <person name="Bryant D.A."/>
            <person name="Richardson P."/>
        </authorList>
    </citation>
    <scope>NUCLEOTIDE SEQUENCE [LARGE SCALE GENOMIC DNA]</scope>
    <source>
        <strain>RS-1</strain>
    </source>
</reference>
<protein>
    <recommendedName>
        <fullName evidence="1">Small ribosomal subunit protein uS7</fullName>
    </recommendedName>
    <alternativeName>
        <fullName evidence="2">30S ribosomal protein S7</fullName>
    </alternativeName>
</protein>
<proteinExistence type="inferred from homology"/>
<sequence>MPRRGTIERRIPPPDPRYNSVLVQQFINKVMQRGKKSIAEKIVYQAFDLAAQRLKKPALEIFETAVRNAGPVIEVKPRRVGGATYQVPVEVKSDRRQSLAMRWLLMSARARSGKPMYERLAAELIDAYNNTGATIKRKEDVQRMAEANRAFSHYGRF</sequence>
<comment type="function">
    <text evidence="1">One of the primary rRNA binding proteins, it binds directly to 16S rRNA where it nucleates assembly of the head domain of the 30S subunit. Is located at the subunit interface close to the decoding center, probably blocks exit of the E-site tRNA.</text>
</comment>
<comment type="subunit">
    <text evidence="1">Part of the 30S ribosomal subunit. Contacts proteins S9 and S11.</text>
</comment>
<comment type="similarity">
    <text evidence="1">Belongs to the universal ribosomal protein uS7 family.</text>
</comment>
<keyword id="KW-0687">Ribonucleoprotein</keyword>
<keyword id="KW-0689">Ribosomal protein</keyword>
<keyword id="KW-0694">RNA-binding</keyword>
<keyword id="KW-0699">rRNA-binding</keyword>
<keyword id="KW-0820">tRNA-binding</keyword>
<organism>
    <name type="scientific">Roseiflexus sp. (strain RS-1)</name>
    <dbReference type="NCBI Taxonomy" id="357808"/>
    <lineage>
        <taxon>Bacteria</taxon>
        <taxon>Bacillati</taxon>
        <taxon>Chloroflexota</taxon>
        <taxon>Chloroflexia</taxon>
        <taxon>Chloroflexales</taxon>
        <taxon>Roseiflexineae</taxon>
        <taxon>Roseiflexaceae</taxon>
        <taxon>Roseiflexus</taxon>
    </lineage>
</organism>
<dbReference type="EMBL" id="CP000686">
    <property type="protein sequence ID" value="ABQ89596.1"/>
    <property type="molecule type" value="Genomic_DNA"/>
</dbReference>
<dbReference type="RefSeq" id="WP_011955949.1">
    <property type="nucleotide sequence ID" value="NC_009523.1"/>
</dbReference>
<dbReference type="SMR" id="A5USJ3"/>
<dbReference type="STRING" id="357808.RoseRS_1189"/>
<dbReference type="KEGG" id="rrs:RoseRS_1189"/>
<dbReference type="eggNOG" id="COG0049">
    <property type="taxonomic scope" value="Bacteria"/>
</dbReference>
<dbReference type="HOGENOM" id="CLU_072226_1_1_0"/>
<dbReference type="OrthoDB" id="9807653at2"/>
<dbReference type="Proteomes" id="UP000006554">
    <property type="component" value="Chromosome"/>
</dbReference>
<dbReference type="GO" id="GO:0015935">
    <property type="term" value="C:small ribosomal subunit"/>
    <property type="evidence" value="ECO:0007669"/>
    <property type="project" value="InterPro"/>
</dbReference>
<dbReference type="GO" id="GO:0019843">
    <property type="term" value="F:rRNA binding"/>
    <property type="evidence" value="ECO:0007669"/>
    <property type="project" value="UniProtKB-UniRule"/>
</dbReference>
<dbReference type="GO" id="GO:0003735">
    <property type="term" value="F:structural constituent of ribosome"/>
    <property type="evidence" value="ECO:0007669"/>
    <property type="project" value="InterPro"/>
</dbReference>
<dbReference type="GO" id="GO:0000049">
    <property type="term" value="F:tRNA binding"/>
    <property type="evidence" value="ECO:0007669"/>
    <property type="project" value="UniProtKB-UniRule"/>
</dbReference>
<dbReference type="GO" id="GO:0006412">
    <property type="term" value="P:translation"/>
    <property type="evidence" value="ECO:0007669"/>
    <property type="project" value="UniProtKB-UniRule"/>
</dbReference>
<dbReference type="CDD" id="cd14869">
    <property type="entry name" value="uS7_Bacteria"/>
    <property type="match status" value="1"/>
</dbReference>
<dbReference type="FunFam" id="1.10.455.10:FF:000001">
    <property type="entry name" value="30S ribosomal protein S7"/>
    <property type="match status" value="1"/>
</dbReference>
<dbReference type="Gene3D" id="1.10.455.10">
    <property type="entry name" value="Ribosomal protein S7 domain"/>
    <property type="match status" value="1"/>
</dbReference>
<dbReference type="HAMAP" id="MF_00480_B">
    <property type="entry name" value="Ribosomal_uS7_B"/>
    <property type="match status" value="1"/>
</dbReference>
<dbReference type="InterPro" id="IPR000235">
    <property type="entry name" value="Ribosomal_uS7"/>
</dbReference>
<dbReference type="InterPro" id="IPR005717">
    <property type="entry name" value="Ribosomal_uS7_bac/org-type"/>
</dbReference>
<dbReference type="InterPro" id="IPR020606">
    <property type="entry name" value="Ribosomal_uS7_CS"/>
</dbReference>
<dbReference type="InterPro" id="IPR023798">
    <property type="entry name" value="Ribosomal_uS7_dom"/>
</dbReference>
<dbReference type="InterPro" id="IPR036823">
    <property type="entry name" value="Ribosomal_uS7_dom_sf"/>
</dbReference>
<dbReference type="NCBIfam" id="TIGR01029">
    <property type="entry name" value="rpsG_bact"/>
    <property type="match status" value="1"/>
</dbReference>
<dbReference type="PANTHER" id="PTHR11205">
    <property type="entry name" value="RIBOSOMAL PROTEIN S7"/>
    <property type="match status" value="1"/>
</dbReference>
<dbReference type="Pfam" id="PF00177">
    <property type="entry name" value="Ribosomal_S7"/>
    <property type="match status" value="1"/>
</dbReference>
<dbReference type="PIRSF" id="PIRSF002122">
    <property type="entry name" value="RPS7p_RPS7a_RPS5e_RPS7o"/>
    <property type="match status" value="1"/>
</dbReference>
<dbReference type="SUPFAM" id="SSF47973">
    <property type="entry name" value="Ribosomal protein S7"/>
    <property type="match status" value="1"/>
</dbReference>
<dbReference type="PROSITE" id="PS00052">
    <property type="entry name" value="RIBOSOMAL_S7"/>
    <property type="match status" value="1"/>
</dbReference>
<feature type="chain" id="PRO_1000014278" description="Small ribosomal subunit protein uS7">
    <location>
        <begin position="1"/>
        <end position="157"/>
    </location>
</feature>
<accession>A5USJ3</accession>